<evidence type="ECO:0000250" key="1"/>
<evidence type="ECO:0000255" key="2"/>
<evidence type="ECO:0000303" key="3">
    <source>
    </source>
</evidence>
<evidence type="ECO:0000305" key="4"/>
<sequence length="399" mass="43086">MAAKAAALSSSPFVSSRRLSSPAASLRARTPRCVMGSEQVRVVVEEEGKTKKRMGVAEPRSAPPAVWTPRAPAQEARLAALRTDGRDSRLKIFSGTANRPLAQEIASYLGVDLGKVLIKRFADGEIYVQLQESVRGCDVFLVQPTCSPVNENLMELFVMIDACRRASARSITVVIPYFGYARADRKAQGREAITAKLSANLLTEAGSDRVIVCDIHSTQALGYFDIPVDHIHGQPVILDYLASKTISKDLVVVSPDVGGVVRARAFAKKLSDAPLAIVDKRRQGHNMSEVMHLIGDVKGKVAIMVDDMIDTAGTITSAAALLKQEGAEAVYACSTHAVFSPPAIERLSGGIFEEVIVTNSILLPEHKCFPQLTVLSMANLVAETIWHVHRDGSVSSIFQ</sequence>
<protein>
    <recommendedName>
        <fullName>Ribose-phosphate pyrophosphokinase 2, chloroplastic</fullName>
        <ecNumber>2.7.6.1</ecNumber>
    </recommendedName>
    <alternativeName>
        <fullName>Phosphoribosyl pyrophosphate synthase 2</fullName>
    </alternativeName>
</protein>
<keyword id="KW-0025">Alternative splicing</keyword>
<keyword id="KW-0067">ATP-binding</keyword>
<keyword id="KW-0150">Chloroplast</keyword>
<keyword id="KW-0418">Kinase</keyword>
<keyword id="KW-0460">Magnesium</keyword>
<keyword id="KW-0479">Metal-binding</keyword>
<keyword id="KW-0545">Nucleotide biosynthesis</keyword>
<keyword id="KW-0547">Nucleotide-binding</keyword>
<keyword id="KW-0934">Plastid</keyword>
<keyword id="KW-1185">Reference proteome</keyword>
<keyword id="KW-0808">Transferase</keyword>
<keyword id="KW-0809">Transit peptide</keyword>
<gene>
    <name type="ordered locus">Os06g0617800</name>
    <name type="ordered locus">LOC_Os06g41360</name>
    <name type="ORF">P0012B02.3-1</name>
    <name type="ORF">P0012B02.3-2</name>
</gene>
<name>KPRS2_ORYSJ</name>
<organism>
    <name type="scientific">Oryza sativa subsp. japonica</name>
    <name type="common">Rice</name>
    <dbReference type="NCBI Taxonomy" id="39947"/>
    <lineage>
        <taxon>Eukaryota</taxon>
        <taxon>Viridiplantae</taxon>
        <taxon>Streptophyta</taxon>
        <taxon>Embryophyta</taxon>
        <taxon>Tracheophyta</taxon>
        <taxon>Spermatophyta</taxon>
        <taxon>Magnoliopsida</taxon>
        <taxon>Liliopsida</taxon>
        <taxon>Poales</taxon>
        <taxon>Poaceae</taxon>
        <taxon>BOP clade</taxon>
        <taxon>Oryzoideae</taxon>
        <taxon>Oryzeae</taxon>
        <taxon>Oryzinae</taxon>
        <taxon>Oryza</taxon>
        <taxon>Oryza sativa</taxon>
    </lineage>
</organism>
<dbReference type="EC" id="2.7.6.1"/>
<dbReference type="EMBL" id="AP003609">
    <property type="protein sequence ID" value="BAD35420.1"/>
    <property type="status" value="ALT_SEQ"/>
    <property type="molecule type" value="Genomic_DNA"/>
</dbReference>
<dbReference type="EMBL" id="AP003609">
    <property type="protein sequence ID" value="BAD35421.1"/>
    <property type="molecule type" value="Genomic_DNA"/>
</dbReference>
<dbReference type="EMBL" id="AP014962">
    <property type="protein sequence ID" value="BAS98633.1"/>
    <property type="molecule type" value="Genomic_DNA"/>
</dbReference>
<dbReference type="EMBL" id="AK065878">
    <property type="status" value="NOT_ANNOTATED_CDS"/>
    <property type="molecule type" value="mRNA"/>
</dbReference>
<dbReference type="EMBL" id="AK067505">
    <property type="status" value="NOT_ANNOTATED_CDS"/>
    <property type="molecule type" value="mRNA"/>
</dbReference>
<dbReference type="EMBL" id="AK068485">
    <property type="status" value="NOT_ANNOTATED_CDS"/>
    <property type="molecule type" value="mRNA"/>
</dbReference>
<dbReference type="RefSeq" id="XP_015644180.1">
    <property type="nucleotide sequence ID" value="XM_015788694.1"/>
</dbReference>
<dbReference type="SMR" id="Q69XQ6"/>
<dbReference type="FunCoup" id="Q69XQ6">
    <property type="interactions" value="2086"/>
</dbReference>
<dbReference type="STRING" id="39947.Q69XQ6"/>
<dbReference type="PaxDb" id="39947-Q69XQ6"/>
<dbReference type="eggNOG" id="KOG1448">
    <property type="taxonomic scope" value="Eukaryota"/>
</dbReference>
<dbReference type="InParanoid" id="Q69XQ6"/>
<dbReference type="OrthoDB" id="413572at2759"/>
<dbReference type="PlantReactome" id="R-OSA-1119278">
    <property type="pathway name" value="PRPP biosynthesis I"/>
</dbReference>
<dbReference type="Proteomes" id="UP000000763">
    <property type="component" value="Chromosome 6"/>
</dbReference>
<dbReference type="Proteomes" id="UP000059680">
    <property type="component" value="Chromosome 6"/>
</dbReference>
<dbReference type="GO" id="GO:0009507">
    <property type="term" value="C:chloroplast"/>
    <property type="evidence" value="ECO:0007669"/>
    <property type="project" value="UniProtKB-SubCell"/>
</dbReference>
<dbReference type="GO" id="GO:0005737">
    <property type="term" value="C:cytoplasm"/>
    <property type="evidence" value="ECO:0000318"/>
    <property type="project" value="GO_Central"/>
</dbReference>
<dbReference type="GO" id="GO:0002189">
    <property type="term" value="C:ribose phosphate diphosphokinase complex"/>
    <property type="evidence" value="ECO:0000318"/>
    <property type="project" value="GO_Central"/>
</dbReference>
<dbReference type="GO" id="GO:0005524">
    <property type="term" value="F:ATP binding"/>
    <property type="evidence" value="ECO:0007669"/>
    <property type="project" value="UniProtKB-KW"/>
</dbReference>
<dbReference type="GO" id="GO:0016301">
    <property type="term" value="F:kinase activity"/>
    <property type="evidence" value="ECO:0007669"/>
    <property type="project" value="UniProtKB-KW"/>
</dbReference>
<dbReference type="GO" id="GO:0000287">
    <property type="term" value="F:magnesium ion binding"/>
    <property type="evidence" value="ECO:0007669"/>
    <property type="project" value="InterPro"/>
</dbReference>
<dbReference type="GO" id="GO:0004749">
    <property type="term" value="F:ribose phosphate diphosphokinase activity"/>
    <property type="evidence" value="ECO:0000318"/>
    <property type="project" value="GO_Central"/>
</dbReference>
<dbReference type="GO" id="GO:0006015">
    <property type="term" value="P:5-phosphoribose 1-diphosphate biosynthetic process"/>
    <property type="evidence" value="ECO:0000318"/>
    <property type="project" value="GO_Central"/>
</dbReference>
<dbReference type="GO" id="GO:0006164">
    <property type="term" value="P:purine nucleotide biosynthetic process"/>
    <property type="evidence" value="ECO:0000318"/>
    <property type="project" value="GO_Central"/>
</dbReference>
<dbReference type="GO" id="GO:0009156">
    <property type="term" value="P:ribonucleoside monophosphate biosynthetic process"/>
    <property type="evidence" value="ECO:0007669"/>
    <property type="project" value="InterPro"/>
</dbReference>
<dbReference type="CDD" id="cd06223">
    <property type="entry name" value="PRTases_typeI"/>
    <property type="match status" value="1"/>
</dbReference>
<dbReference type="FunFam" id="3.40.50.2020:FF:000007">
    <property type="entry name" value="Ribose-phosphate pyrophosphokinase"/>
    <property type="match status" value="1"/>
</dbReference>
<dbReference type="Gene3D" id="3.40.50.2020">
    <property type="match status" value="2"/>
</dbReference>
<dbReference type="HAMAP" id="MF_00583_B">
    <property type="entry name" value="RibP_PPkinase_B"/>
    <property type="match status" value="1"/>
</dbReference>
<dbReference type="InterPro" id="IPR000842">
    <property type="entry name" value="PRib_PP_synth_CS"/>
</dbReference>
<dbReference type="InterPro" id="IPR029099">
    <property type="entry name" value="Pribosyltran_N"/>
</dbReference>
<dbReference type="InterPro" id="IPR000836">
    <property type="entry name" value="PRibTrfase_dom"/>
</dbReference>
<dbReference type="InterPro" id="IPR029057">
    <property type="entry name" value="PRTase-like"/>
</dbReference>
<dbReference type="InterPro" id="IPR005946">
    <property type="entry name" value="Rib-P_diPkinase"/>
</dbReference>
<dbReference type="InterPro" id="IPR037515">
    <property type="entry name" value="Rib-P_diPkinase_bac"/>
</dbReference>
<dbReference type="NCBIfam" id="NF002320">
    <property type="entry name" value="PRK01259.1"/>
    <property type="match status" value="1"/>
</dbReference>
<dbReference type="NCBIfam" id="NF002758">
    <property type="entry name" value="PRK02812.1"/>
    <property type="match status" value="1"/>
</dbReference>
<dbReference type="NCBIfam" id="TIGR01251">
    <property type="entry name" value="ribP_PPkin"/>
    <property type="match status" value="1"/>
</dbReference>
<dbReference type="PANTHER" id="PTHR10210">
    <property type="entry name" value="RIBOSE-PHOSPHATE DIPHOSPHOKINASE FAMILY MEMBER"/>
    <property type="match status" value="1"/>
</dbReference>
<dbReference type="PANTHER" id="PTHR10210:SF41">
    <property type="entry name" value="RIBOSE-PHOSPHATE PYROPHOSPHOKINASE 1, CHLOROPLASTIC"/>
    <property type="match status" value="1"/>
</dbReference>
<dbReference type="Pfam" id="PF14572">
    <property type="entry name" value="Pribosyl_synth"/>
    <property type="match status" value="1"/>
</dbReference>
<dbReference type="Pfam" id="PF13793">
    <property type="entry name" value="Pribosyltran_N"/>
    <property type="match status" value="1"/>
</dbReference>
<dbReference type="SMART" id="SM01400">
    <property type="entry name" value="Pribosyltran_N"/>
    <property type="match status" value="1"/>
</dbReference>
<dbReference type="SUPFAM" id="SSF53271">
    <property type="entry name" value="PRTase-like"/>
    <property type="match status" value="1"/>
</dbReference>
<dbReference type="PROSITE" id="PS00114">
    <property type="entry name" value="PRPP_SYNTHASE"/>
    <property type="match status" value="1"/>
</dbReference>
<reference key="1">
    <citation type="journal article" date="2005" name="Nature">
        <title>The map-based sequence of the rice genome.</title>
        <authorList>
            <consortium name="International rice genome sequencing project (IRGSP)"/>
        </authorList>
    </citation>
    <scope>NUCLEOTIDE SEQUENCE [LARGE SCALE GENOMIC DNA]</scope>
    <source>
        <strain>cv. Nipponbare</strain>
    </source>
</reference>
<reference key="2">
    <citation type="journal article" date="2013" name="Rice">
        <title>Improvement of the Oryza sativa Nipponbare reference genome using next generation sequence and optical map data.</title>
        <authorList>
            <person name="Kawahara Y."/>
            <person name="de la Bastide M."/>
            <person name="Hamilton J.P."/>
            <person name="Kanamori H."/>
            <person name="McCombie W.R."/>
            <person name="Ouyang S."/>
            <person name="Schwartz D.C."/>
            <person name="Tanaka T."/>
            <person name="Wu J."/>
            <person name="Zhou S."/>
            <person name="Childs K.L."/>
            <person name="Davidson R.M."/>
            <person name="Lin H."/>
            <person name="Quesada-Ocampo L."/>
            <person name="Vaillancourt B."/>
            <person name="Sakai H."/>
            <person name="Lee S.S."/>
            <person name="Kim J."/>
            <person name="Numa H."/>
            <person name="Itoh T."/>
            <person name="Buell C.R."/>
            <person name="Matsumoto T."/>
        </authorList>
    </citation>
    <scope>GENOME REANNOTATION</scope>
    <source>
        <strain>cv. Nipponbare</strain>
    </source>
</reference>
<reference key="3">
    <citation type="journal article" date="2003" name="Science">
        <title>Collection, mapping, and annotation of over 28,000 cDNA clones from japonica rice.</title>
        <authorList>
            <consortium name="The rice full-length cDNA consortium"/>
        </authorList>
    </citation>
    <scope>NUCLEOTIDE SEQUENCE [LARGE SCALE MRNA] (ISOFORMS 1 AND 2)</scope>
    <source>
        <strain>cv. Nipponbare</strain>
    </source>
</reference>
<accession>Q69XQ6</accession>
<accession>Q69XQ7</accession>
<comment type="catalytic activity">
    <reaction>
        <text>D-ribose 5-phosphate + ATP = 5-phospho-alpha-D-ribose 1-diphosphate + AMP + H(+)</text>
        <dbReference type="Rhea" id="RHEA:15609"/>
        <dbReference type="ChEBI" id="CHEBI:15378"/>
        <dbReference type="ChEBI" id="CHEBI:30616"/>
        <dbReference type="ChEBI" id="CHEBI:58017"/>
        <dbReference type="ChEBI" id="CHEBI:78346"/>
        <dbReference type="ChEBI" id="CHEBI:456215"/>
        <dbReference type="EC" id="2.7.6.1"/>
    </reaction>
</comment>
<comment type="cofactor">
    <cofactor evidence="1">
        <name>Mg(2+)</name>
        <dbReference type="ChEBI" id="CHEBI:18420"/>
    </cofactor>
    <text evidence="1">Binds 1 Mg(2+) ion per subunit.</text>
</comment>
<comment type="subcellular location">
    <subcellularLocation>
        <location evidence="4">Plastid</location>
        <location evidence="4">Chloroplast</location>
    </subcellularLocation>
</comment>
<comment type="alternative products">
    <event type="alternative splicing"/>
    <isoform>
        <id>Q69XQ6-1</id>
        <name>2</name>
        <sequence type="displayed"/>
    </isoform>
    <isoform>
        <id>Q69XQ6-2</id>
        <name>1</name>
        <sequence type="described" ref="VSP_013704"/>
    </isoform>
</comment>
<comment type="miscellaneous">
    <molecule>Isoform 2</molecule>
    <text>May be due to an intron retention.</text>
</comment>
<comment type="similarity">
    <text evidence="4">Belongs to the ribose-phosphate pyrophosphokinase family.</text>
</comment>
<comment type="sequence caution" evidence="4">
    <conflict type="erroneous gene model prediction">
        <sequence resource="EMBL-CDS" id="BAD35420"/>
    </conflict>
</comment>
<feature type="transit peptide" description="Chloroplast" evidence="2">
    <location>
        <begin position="1"/>
        <end position="32"/>
    </location>
</feature>
<feature type="chain" id="PRO_0000141098" description="Ribose-phosphate pyrophosphokinase 2, chloroplastic">
    <location>
        <begin position="33"/>
        <end position="399"/>
    </location>
</feature>
<feature type="region of interest" description="Binding of phosphoribosylpyrophosphate" evidence="2">
    <location>
        <begin position="299"/>
        <end position="314"/>
    </location>
</feature>
<feature type="binding site" evidence="1">
    <location>
        <position position="214"/>
    </location>
    <ligand>
        <name>Mg(2+)</name>
        <dbReference type="ChEBI" id="CHEBI:18420"/>
    </ligand>
</feature>
<feature type="binding site" evidence="1">
    <location>
        <position position="216"/>
    </location>
    <ligand>
        <name>Mg(2+)</name>
        <dbReference type="ChEBI" id="CHEBI:18420"/>
    </ligand>
</feature>
<feature type="binding site" evidence="1">
    <location>
        <position position="225"/>
    </location>
    <ligand>
        <name>Mg(2+)</name>
        <dbReference type="ChEBI" id="CHEBI:18420"/>
    </ligand>
</feature>
<feature type="binding site" evidence="1">
    <location>
        <position position="229"/>
    </location>
    <ligand>
        <name>Mg(2+)</name>
        <dbReference type="ChEBI" id="CHEBI:18420"/>
    </ligand>
</feature>
<feature type="splice variant" id="VSP_013704" description="In isoform 1." evidence="3">
    <original>SPPAIERLSGGIFEEVIVTNSILLPEHKCFPQLTVLSMANLVAETIWHVHRDGSVSSIFQ</original>
    <variation>RFGSWFIVTSMIHVIVLIHWLVAKEPCYGMIRQIGFMFDQYKNDRVEQ</variation>
    <location>
        <begin position="340"/>
        <end position="399"/>
    </location>
</feature>
<proteinExistence type="evidence at transcript level"/>